<evidence type="ECO:0000255" key="1">
    <source>
        <dbReference type="HAMAP-Rule" id="MF_00146"/>
    </source>
</evidence>
<reference key="1">
    <citation type="journal article" date="2008" name="Genome Biol.">
        <title>A genomic analysis of the archaeal system Ignicoccus hospitalis-Nanoarchaeum equitans.</title>
        <authorList>
            <person name="Podar M."/>
            <person name="Anderson I."/>
            <person name="Makarova K.S."/>
            <person name="Elkins J.G."/>
            <person name="Ivanova N."/>
            <person name="Wall M.A."/>
            <person name="Lykidis A."/>
            <person name="Mavromatis K."/>
            <person name="Sun H."/>
            <person name="Hudson M.E."/>
            <person name="Chen W."/>
            <person name="Deciu C."/>
            <person name="Hutchison D."/>
            <person name="Eads J.R."/>
            <person name="Anderson A."/>
            <person name="Fernandes F."/>
            <person name="Szeto E."/>
            <person name="Lapidus A."/>
            <person name="Kyrpides N.C."/>
            <person name="Saier M.H. Jr."/>
            <person name="Richardson P.M."/>
            <person name="Rachel R."/>
            <person name="Huber H."/>
            <person name="Eisen J.A."/>
            <person name="Koonin E.V."/>
            <person name="Keller M."/>
            <person name="Stetter K.O."/>
        </authorList>
    </citation>
    <scope>NUCLEOTIDE SEQUENCE [LARGE SCALE GENOMIC DNA]</scope>
    <source>
        <strain>KIN4/I / DSM 18386 / JCM 14125</strain>
    </source>
</reference>
<sequence>MILSDGGIKSYLRRGLMKIEPFDENQVRENGVDLTIGHQYARFKNTEDVLDVTKEEDLSKYYELGFMDDEGIVIKPYEHVLLHTREYIEMPADLVGLVNLKSSFARLGLYIPPTVVDAGFKGEIVIEIIGSSFPVRVRPGVPFIHLVFLRTDSPVLRDYSVRGHYQGQRGIRLPKLPIKL</sequence>
<comment type="function">
    <text evidence="1">Catalyzes the deamination of dCTP to dUTP.</text>
</comment>
<comment type="catalytic activity">
    <reaction evidence="1">
        <text>dCTP + H2O + H(+) = dUTP + NH4(+)</text>
        <dbReference type="Rhea" id="RHEA:22680"/>
        <dbReference type="ChEBI" id="CHEBI:15377"/>
        <dbReference type="ChEBI" id="CHEBI:15378"/>
        <dbReference type="ChEBI" id="CHEBI:28938"/>
        <dbReference type="ChEBI" id="CHEBI:61481"/>
        <dbReference type="ChEBI" id="CHEBI:61555"/>
        <dbReference type="EC" id="3.5.4.13"/>
    </reaction>
</comment>
<comment type="pathway">
    <text evidence="1">Pyrimidine metabolism; dUMP biosynthesis; dUMP from dCTP (dUTP route): step 1/2.</text>
</comment>
<comment type="subunit">
    <text evidence="1">Homotrimer.</text>
</comment>
<comment type="similarity">
    <text evidence="1">Belongs to the dCTP deaminase family.</text>
</comment>
<name>DCD_IGNH4</name>
<feature type="chain" id="PRO_1000009742" description="dCTP deaminase">
    <location>
        <begin position="1"/>
        <end position="180"/>
    </location>
</feature>
<feature type="active site" description="Proton donor/acceptor" evidence="1">
    <location>
        <position position="127"/>
    </location>
</feature>
<feature type="binding site" evidence="1">
    <location>
        <begin position="101"/>
        <end position="106"/>
    </location>
    <ligand>
        <name>dCTP</name>
        <dbReference type="ChEBI" id="CHEBI:61481"/>
    </ligand>
</feature>
<feature type="binding site" evidence="1">
    <location>
        <position position="117"/>
    </location>
    <ligand>
        <name>dCTP</name>
        <dbReference type="ChEBI" id="CHEBI:61481"/>
    </ligand>
</feature>
<feature type="binding site" evidence="1">
    <location>
        <position position="159"/>
    </location>
    <ligand>
        <name>dCTP</name>
        <dbReference type="ChEBI" id="CHEBI:61481"/>
    </ligand>
</feature>
<feature type="binding site" evidence="1">
    <location>
        <position position="168"/>
    </location>
    <ligand>
        <name>dCTP</name>
        <dbReference type="ChEBI" id="CHEBI:61481"/>
    </ligand>
</feature>
<keyword id="KW-0378">Hydrolase</keyword>
<keyword id="KW-0546">Nucleotide metabolism</keyword>
<keyword id="KW-0547">Nucleotide-binding</keyword>
<keyword id="KW-1185">Reference proteome</keyword>
<proteinExistence type="inferred from homology"/>
<organism>
    <name type="scientific">Ignicoccus hospitalis (strain KIN4/I / DSM 18386 / JCM 14125)</name>
    <dbReference type="NCBI Taxonomy" id="453591"/>
    <lineage>
        <taxon>Archaea</taxon>
        <taxon>Thermoproteota</taxon>
        <taxon>Thermoprotei</taxon>
        <taxon>Desulfurococcales</taxon>
        <taxon>Desulfurococcaceae</taxon>
        <taxon>Ignicoccus</taxon>
    </lineage>
</organism>
<protein>
    <recommendedName>
        <fullName evidence="1">dCTP deaminase</fullName>
        <ecNumber evidence="1">3.5.4.13</ecNumber>
    </recommendedName>
    <alternativeName>
        <fullName evidence="1">Deoxycytidine triphosphate deaminase</fullName>
    </alternativeName>
</protein>
<dbReference type="EC" id="3.5.4.13" evidence="1"/>
<dbReference type="EMBL" id="CP000816">
    <property type="protein sequence ID" value="ABU81408.1"/>
    <property type="molecule type" value="Genomic_DNA"/>
</dbReference>
<dbReference type="RefSeq" id="WP_011998260.1">
    <property type="nucleotide sequence ID" value="NC_009776.1"/>
</dbReference>
<dbReference type="SMR" id="A8A906"/>
<dbReference type="STRING" id="453591.Igni_0224"/>
<dbReference type="GeneID" id="5562083"/>
<dbReference type="KEGG" id="iho:Igni_0224"/>
<dbReference type="eggNOG" id="arCOG04048">
    <property type="taxonomic scope" value="Archaea"/>
</dbReference>
<dbReference type="HOGENOM" id="CLU_087476_3_0_2"/>
<dbReference type="OrthoDB" id="33242at2157"/>
<dbReference type="PhylomeDB" id="A8A906"/>
<dbReference type="UniPathway" id="UPA00610">
    <property type="reaction ID" value="UER00665"/>
</dbReference>
<dbReference type="Proteomes" id="UP000000262">
    <property type="component" value="Chromosome"/>
</dbReference>
<dbReference type="GO" id="GO:0008829">
    <property type="term" value="F:dCTP deaminase activity"/>
    <property type="evidence" value="ECO:0007669"/>
    <property type="project" value="UniProtKB-UniRule"/>
</dbReference>
<dbReference type="GO" id="GO:0000166">
    <property type="term" value="F:nucleotide binding"/>
    <property type="evidence" value="ECO:0007669"/>
    <property type="project" value="UniProtKB-KW"/>
</dbReference>
<dbReference type="GO" id="GO:0006226">
    <property type="term" value="P:dUMP biosynthetic process"/>
    <property type="evidence" value="ECO:0007669"/>
    <property type="project" value="UniProtKB-UniPathway"/>
</dbReference>
<dbReference type="GO" id="GO:0006229">
    <property type="term" value="P:dUTP biosynthetic process"/>
    <property type="evidence" value="ECO:0007669"/>
    <property type="project" value="UniProtKB-UniRule"/>
</dbReference>
<dbReference type="CDD" id="cd07557">
    <property type="entry name" value="trimeric_dUTPase"/>
    <property type="match status" value="1"/>
</dbReference>
<dbReference type="Gene3D" id="2.70.40.10">
    <property type="match status" value="1"/>
</dbReference>
<dbReference type="HAMAP" id="MF_00146">
    <property type="entry name" value="dCTP_deaminase"/>
    <property type="match status" value="1"/>
</dbReference>
<dbReference type="InterPro" id="IPR011962">
    <property type="entry name" value="dCTP_deaminase"/>
</dbReference>
<dbReference type="InterPro" id="IPR036157">
    <property type="entry name" value="dUTPase-like_sf"/>
</dbReference>
<dbReference type="InterPro" id="IPR033704">
    <property type="entry name" value="dUTPase_trimeric"/>
</dbReference>
<dbReference type="NCBIfam" id="TIGR02274">
    <property type="entry name" value="dCTP_deam"/>
    <property type="match status" value="1"/>
</dbReference>
<dbReference type="PANTHER" id="PTHR42680">
    <property type="entry name" value="DCTP DEAMINASE"/>
    <property type="match status" value="1"/>
</dbReference>
<dbReference type="PANTHER" id="PTHR42680:SF3">
    <property type="entry name" value="DCTP DEAMINASE"/>
    <property type="match status" value="1"/>
</dbReference>
<dbReference type="Pfam" id="PF22769">
    <property type="entry name" value="DCD"/>
    <property type="match status" value="1"/>
</dbReference>
<dbReference type="SUPFAM" id="SSF51283">
    <property type="entry name" value="dUTPase-like"/>
    <property type="match status" value="1"/>
</dbReference>
<accession>A8A906</accession>
<gene>
    <name evidence="1" type="primary">dcd</name>
    <name type="ordered locus">Igni_0224</name>
</gene>